<evidence type="ECO:0000250" key="1"/>
<evidence type="ECO:0000255" key="2"/>
<evidence type="ECO:0000255" key="3">
    <source>
        <dbReference type="PROSITE-ProRule" id="PRU00172"/>
    </source>
</evidence>
<evidence type="ECO:0000256" key="4">
    <source>
        <dbReference type="SAM" id="MobiDB-lite"/>
    </source>
</evidence>
<accession>Q54XT6</accession>
<feature type="chain" id="PRO_0000380216" description="Rho GTPase-activating protein gacR">
    <location>
        <begin position="1"/>
        <end position="783"/>
    </location>
</feature>
<feature type="domain" description="Rho-GAP" evidence="3">
    <location>
        <begin position="319"/>
        <end position="509"/>
    </location>
</feature>
<feature type="region of interest" description="Disordered" evidence="4">
    <location>
        <begin position="262"/>
        <end position="299"/>
    </location>
</feature>
<feature type="region of interest" description="Disordered" evidence="4">
    <location>
        <begin position="527"/>
        <end position="745"/>
    </location>
</feature>
<feature type="coiled-coil region" evidence="2">
    <location>
        <begin position="138"/>
        <end position="188"/>
    </location>
</feature>
<feature type="compositionally biased region" description="Low complexity" evidence="4">
    <location>
        <begin position="283"/>
        <end position="299"/>
    </location>
</feature>
<feature type="compositionally biased region" description="Gly residues" evidence="4">
    <location>
        <begin position="527"/>
        <end position="539"/>
    </location>
</feature>
<feature type="compositionally biased region" description="Low complexity" evidence="4">
    <location>
        <begin position="568"/>
        <end position="589"/>
    </location>
</feature>
<feature type="compositionally biased region" description="Low complexity" evidence="4">
    <location>
        <begin position="599"/>
        <end position="630"/>
    </location>
</feature>
<feature type="compositionally biased region" description="Low complexity" evidence="4">
    <location>
        <begin position="641"/>
        <end position="651"/>
    </location>
</feature>
<feature type="compositionally biased region" description="Low complexity" evidence="4">
    <location>
        <begin position="661"/>
        <end position="698"/>
    </location>
</feature>
<feature type="compositionally biased region" description="Polar residues" evidence="4">
    <location>
        <begin position="706"/>
        <end position="738"/>
    </location>
</feature>
<feature type="site" description="Arginine finger; crucial for GTP hydrolysis by stabilizing the transition state" evidence="3">
    <location>
        <position position="356"/>
    </location>
</feature>
<comment type="function">
    <text evidence="1">Rho GTPase-activating protein involved in the signal transduction pathway.</text>
</comment>
<comment type="subcellular location">
    <subcellularLocation>
        <location evidence="1">Cytoplasm</location>
    </subcellularLocation>
</comment>
<protein>
    <recommendedName>
        <fullName>Rho GTPase-activating protein gacR</fullName>
    </recommendedName>
    <alternativeName>
        <fullName>GTPase activating factor for raC protein R</fullName>
    </alternativeName>
</protein>
<gene>
    <name type="primary">gacR</name>
    <name type="ORF">DDB_G0278755</name>
</gene>
<organism>
    <name type="scientific">Dictyostelium discoideum</name>
    <name type="common">Social amoeba</name>
    <dbReference type="NCBI Taxonomy" id="44689"/>
    <lineage>
        <taxon>Eukaryota</taxon>
        <taxon>Amoebozoa</taxon>
        <taxon>Evosea</taxon>
        <taxon>Eumycetozoa</taxon>
        <taxon>Dictyostelia</taxon>
        <taxon>Dictyosteliales</taxon>
        <taxon>Dictyosteliaceae</taxon>
        <taxon>Dictyostelium</taxon>
    </lineage>
</organism>
<sequence>MKKFNQTFSSVKDLIGNKKETLTEFPDYIYKTKSLEDLKGYTRTLNLKLTKHSKTNQLLIEENKQLSEQILLYSNLFINNEESSLNVCEPLSNVFKIVGEMINEIENYRQTFEQSISQKWLQQLNEYGKSDCKDGQLAKNRFDKARLSFDEASEQFKQLRKKQNNINNEKLLEAEEDLDYATQQFSDIASESLQTMDDIIVKHNLDSFESASSTIQSYKDFFQKGLDHCLSVQSDLEIQKHAMSKYKQQLLEKKKLRSTVVQFEQTNSSRTISLPPPPPPKPTSSTPSSSPSPSPSSSIINIHNNYIAMPKGNTKVFGMALSTITEREKSDIPMIIDKSIQFLLLEENITQEGIFRVSPNQKQLTDLKNNVNAGYITTLDGIDDAHLISSFVKAFLREMPIPLFTFDLYHSLVDCVINEEKYDCDKIKISNAIVLVLQKLPKPNFLLAKSLISLLWKISTKSSQNKMTTSNLAVTVAPNVLYPKLLDIRSLTNANATIEFIISNFNNIFNNQLISNLYNNSCGVSGGSSGGGGGGGSSGGVANPRHSVLPPSLPARPQSVMFKNTPLSVNTSSSQSSSSSSSSSFASSASPPPTPTKPPSSSSSPIITTTSPNSNTNINSNTSVNTNINPRHSVLPPSLPPKKISSSSNSLPSPPPPSSPSIPEKSQNNITPTILSSSLSAPTSPTTTTTTNPLRSSTGSPKPISNRVSMYLQNSNTGVPLPSQKPQRVISNNNTTTNSRPLSNSLDLPPPLAPVGMPLETLEPIQRNLTSNEAITISEVNWN</sequence>
<reference key="1">
    <citation type="journal article" date="2005" name="Nature">
        <title>The genome of the social amoeba Dictyostelium discoideum.</title>
        <authorList>
            <person name="Eichinger L."/>
            <person name="Pachebat J.A."/>
            <person name="Gloeckner G."/>
            <person name="Rajandream M.A."/>
            <person name="Sucgang R."/>
            <person name="Berriman M."/>
            <person name="Song J."/>
            <person name="Olsen R."/>
            <person name="Szafranski K."/>
            <person name="Xu Q."/>
            <person name="Tunggal B."/>
            <person name="Kummerfeld S."/>
            <person name="Madera M."/>
            <person name="Konfortov B.A."/>
            <person name="Rivero F."/>
            <person name="Bankier A.T."/>
            <person name="Lehmann R."/>
            <person name="Hamlin N."/>
            <person name="Davies R."/>
            <person name="Gaudet P."/>
            <person name="Fey P."/>
            <person name="Pilcher K."/>
            <person name="Chen G."/>
            <person name="Saunders D."/>
            <person name="Sodergren E.J."/>
            <person name="Davis P."/>
            <person name="Kerhornou A."/>
            <person name="Nie X."/>
            <person name="Hall N."/>
            <person name="Anjard C."/>
            <person name="Hemphill L."/>
            <person name="Bason N."/>
            <person name="Farbrother P."/>
            <person name="Desany B."/>
            <person name="Just E."/>
            <person name="Morio T."/>
            <person name="Rost R."/>
            <person name="Churcher C.M."/>
            <person name="Cooper J."/>
            <person name="Haydock S."/>
            <person name="van Driessche N."/>
            <person name="Cronin A."/>
            <person name="Goodhead I."/>
            <person name="Muzny D.M."/>
            <person name="Mourier T."/>
            <person name="Pain A."/>
            <person name="Lu M."/>
            <person name="Harper D."/>
            <person name="Lindsay R."/>
            <person name="Hauser H."/>
            <person name="James K.D."/>
            <person name="Quiles M."/>
            <person name="Madan Babu M."/>
            <person name="Saito T."/>
            <person name="Buchrieser C."/>
            <person name="Wardroper A."/>
            <person name="Felder M."/>
            <person name="Thangavelu M."/>
            <person name="Johnson D."/>
            <person name="Knights A."/>
            <person name="Loulseged H."/>
            <person name="Mungall K.L."/>
            <person name="Oliver K."/>
            <person name="Price C."/>
            <person name="Quail M.A."/>
            <person name="Urushihara H."/>
            <person name="Hernandez J."/>
            <person name="Rabbinowitsch E."/>
            <person name="Steffen D."/>
            <person name="Sanders M."/>
            <person name="Ma J."/>
            <person name="Kohara Y."/>
            <person name="Sharp S."/>
            <person name="Simmonds M.N."/>
            <person name="Spiegler S."/>
            <person name="Tivey A."/>
            <person name="Sugano S."/>
            <person name="White B."/>
            <person name="Walker D."/>
            <person name="Woodward J.R."/>
            <person name="Winckler T."/>
            <person name="Tanaka Y."/>
            <person name="Shaulsky G."/>
            <person name="Schleicher M."/>
            <person name="Weinstock G.M."/>
            <person name="Rosenthal A."/>
            <person name="Cox E.C."/>
            <person name="Chisholm R.L."/>
            <person name="Gibbs R.A."/>
            <person name="Loomis W.F."/>
            <person name="Platzer M."/>
            <person name="Kay R.R."/>
            <person name="Williams J.G."/>
            <person name="Dear P.H."/>
            <person name="Noegel A.A."/>
            <person name="Barrell B.G."/>
            <person name="Kuspa A."/>
        </authorList>
    </citation>
    <scope>NUCLEOTIDE SEQUENCE [LARGE SCALE GENOMIC DNA]</scope>
    <source>
        <strain>AX4</strain>
    </source>
</reference>
<dbReference type="EMBL" id="AAFI02000024">
    <property type="protein sequence ID" value="EAL67979.1"/>
    <property type="molecule type" value="Genomic_DNA"/>
</dbReference>
<dbReference type="RefSeq" id="XP_641917.1">
    <property type="nucleotide sequence ID" value="XM_636825.1"/>
</dbReference>
<dbReference type="SMR" id="Q54XT6"/>
<dbReference type="FunCoup" id="Q54XT6">
    <property type="interactions" value="119"/>
</dbReference>
<dbReference type="GlyGen" id="Q54XT6">
    <property type="glycosylation" value="2 sites"/>
</dbReference>
<dbReference type="PaxDb" id="44689-DDB0233843"/>
<dbReference type="EnsemblProtists" id="EAL67979">
    <property type="protein sequence ID" value="EAL67979"/>
    <property type="gene ID" value="DDB_G0278755"/>
</dbReference>
<dbReference type="GeneID" id="8621676"/>
<dbReference type="KEGG" id="ddi:DDB_G0278755"/>
<dbReference type="dictyBase" id="DDB_G0278755">
    <property type="gene designation" value="gacR"/>
</dbReference>
<dbReference type="VEuPathDB" id="AmoebaDB:DDB_G0278755"/>
<dbReference type="eggNOG" id="KOG4406">
    <property type="taxonomic scope" value="Eukaryota"/>
</dbReference>
<dbReference type="HOGENOM" id="CLU_358064_0_0_1"/>
<dbReference type="InParanoid" id="Q54XT6"/>
<dbReference type="OMA" id="AINKTCE"/>
<dbReference type="PhylomeDB" id="Q54XT6"/>
<dbReference type="PRO" id="PR:Q54XT6"/>
<dbReference type="Proteomes" id="UP000002195">
    <property type="component" value="Chromosome 3"/>
</dbReference>
<dbReference type="GO" id="GO:0005737">
    <property type="term" value="C:cytoplasm"/>
    <property type="evidence" value="ECO:0000318"/>
    <property type="project" value="GO_Central"/>
</dbReference>
<dbReference type="GO" id="GO:0005096">
    <property type="term" value="F:GTPase activator activity"/>
    <property type="evidence" value="ECO:0000318"/>
    <property type="project" value="GO_Central"/>
</dbReference>
<dbReference type="GO" id="GO:0007264">
    <property type="term" value="P:small GTPase-mediated signal transduction"/>
    <property type="evidence" value="ECO:0000318"/>
    <property type="project" value="GO_Central"/>
</dbReference>
<dbReference type="CDD" id="cd07307">
    <property type="entry name" value="BAR"/>
    <property type="match status" value="1"/>
</dbReference>
<dbReference type="CDD" id="cd00159">
    <property type="entry name" value="RhoGAP"/>
    <property type="match status" value="1"/>
</dbReference>
<dbReference type="Gene3D" id="1.20.1270.60">
    <property type="entry name" value="Arfaptin homology (AH) domain/BAR domain"/>
    <property type="match status" value="1"/>
</dbReference>
<dbReference type="Gene3D" id="1.10.555.10">
    <property type="entry name" value="Rho GTPase activation protein"/>
    <property type="match status" value="1"/>
</dbReference>
<dbReference type="InterPro" id="IPR027267">
    <property type="entry name" value="AH/BAR_dom_sf"/>
</dbReference>
<dbReference type="InterPro" id="IPR004148">
    <property type="entry name" value="BAR_dom"/>
</dbReference>
<dbReference type="InterPro" id="IPR008936">
    <property type="entry name" value="Rho_GTPase_activation_prot"/>
</dbReference>
<dbReference type="InterPro" id="IPR000198">
    <property type="entry name" value="RhoGAP_dom"/>
</dbReference>
<dbReference type="PANTHER" id="PTHR45808">
    <property type="entry name" value="RHO GTPASE-ACTIVATING PROTEIN 68F"/>
    <property type="match status" value="1"/>
</dbReference>
<dbReference type="PANTHER" id="PTHR45808:SF16">
    <property type="entry name" value="RHO GTPASE-ACTIVATING PROTEIN GACR"/>
    <property type="match status" value="1"/>
</dbReference>
<dbReference type="Pfam" id="PF16746">
    <property type="entry name" value="BAR_3"/>
    <property type="match status" value="1"/>
</dbReference>
<dbReference type="Pfam" id="PF00620">
    <property type="entry name" value="RhoGAP"/>
    <property type="match status" value="1"/>
</dbReference>
<dbReference type="SMART" id="SM00324">
    <property type="entry name" value="RhoGAP"/>
    <property type="match status" value="1"/>
</dbReference>
<dbReference type="SUPFAM" id="SSF103657">
    <property type="entry name" value="BAR/IMD domain-like"/>
    <property type="match status" value="1"/>
</dbReference>
<dbReference type="SUPFAM" id="SSF48350">
    <property type="entry name" value="GTPase activation domain, GAP"/>
    <property type="match status" value="1"/>
</dbReference>
<dbReference type="PROSITE" id="PS50238">
    <property type="entry name" value="RHOGAP"/>
    <property type="match status" value="1"/>
</dbReference>
<keyword id="KW-0175">Coiled coil</keyword>
<keyword id="KW-0963">Cytoplasm</keyword>
<keyword id="KW-0343">GTPase activation</keyword>
<keyword id="KW-1185">Reference proteome</keyword>
<name>GACR_DICDI</name>
<proteinExistence type="inferred from homology"/>